<keyword id="KW-0064">Aspartyl protease</keyword>
<keyword id="KW-0997">Cell inner membrane</keyword>
<keyword id="KW-1003">Cell membrane</keyword>
<keyword id="KW-0378">Hydrolase</keyword>
<keyword id="KW-0472">Membrane</keyword>
<keyword id="KW-0645">Protease</keyword>
<keyword id="KW-0812">Transmembrane</keyword>
<keyword id="KW-1133">Transmembrane helix</keyword>
<name>LSPA_ECODH</name>
<protein>
    <recommendedName>
        <fullName evidence="1">Lipoprotein signal peptidase</fullName>
        <ecNumber evidence="1">3.4.23.36</ecNumber>
    </recommendedName>
    <alternativeName>
        <fullName evidence="1">Prolipoprotein signal peptidase</fullName>
    </alternativeName>
    <alternativeName>
        <fullName evidence="1">Signal peptidase II</fullName>
        <shortName evidence="1">SPase II</shortName>
    </alternativeName>
</protein>
<dbReference type="EC" id="3.4.23.36" evidence="1"/>
<dbReference type="EMBL" id="CP000948">
    <property type="protein sequence ID" value="ACB01232.1"/>
    <property type="molecule type" value="Genomic_DNA"/>
</dbReference>
<dbReference type="RefSeq" id="WP_000083372.1">
    <property type="nucleotide sequence ID" value="NC_010473.1"/>
</dbReference>
<dbReference type="SMR" id="B1XBF2"/>
<dbReference type="MEROPS" id="A08.001"/>
<dbReference type="GeneID" id="93777409"/>
<dbReference type="KEGG" id="ecd:ECDH10B_0028"/>
<dbReference type="HOGENOM" id="CLU_083252_4_0_6"/>
<dbReference type="UniPathway" id="UPA00665"/>
<dbReference type="GO" id="GO:0005886">
    <property type="term" value="C:plasma membrane"/>
    <property type="evidence" value="ECO:0007669"/>
    <property type="project" value="UniProtKB-SubCell"/>
</dbReference>
<dbReference type="GO" id="GO:0004190">
    <property type="term" value="F:aspartic-type endopeptidase activity"/>
    <property type="evidence" value="ECO:0007669"/>
    <property type="project" value="UniProtKB-UniRule"/>
</dbReference>
<dbReference type="GO" id="GO:0006508">
    <property type="term" value="P:proteolysis"/>
    <property type="evidence" value="ECO:0007669"/>
    <property type="project" value="UniProtKB-KW"/>
</dbReference>
<dbReference type="HAMAP" id="MF_00161">
    <property type="entry name" value="LspA"/>
    <property type="match status" value="1"/>
</dbReference>
<dbReference type="InterPro" id="IPR001872">
    <property type="entry name" value="Peptidase_A8"/>
</dbReference>
<dbReference type="NCBIfam" id="TIGR00077">
    <property type="entry name" value="lspA"/>
    <property type="match status" value="1"/>
</dbReference>
<dbReference type="PANTHER" id="PTHR33695">
    <property type="entry name" value="LIPOPROTEIN SIGNAL PEPTIDASE"/>
    <property type="match status" value="1"/>
</dbReference>
<dbReference type="PANTHER" id="PTHR33695:SF1">
    <property type="entry name" value="LIPOPROTEIN SIGNAL PEPTIDASE"/>
    <property type="match status" value="1"/>
</dbReference>
<dbReference type="Pfam" id="PF01252">
    <property type="entry name" value="Peptidase_A8"/>
    <property type="match status" value="1"/>
</dbReference>
<dbReference type="PRINTS" id="PR00781">
    <property type="entry name" value="LIPOSIGPTASE"/>
</dbReference>
<dbReference type="PROSITE" id="PS00855">
    <property type="entry name" value="SPASE_II"/>
    <property type="match status" value="1"/>
</dbReference>
<gene>
    <name evidence="1" type="primary">lspA</name>
    <name type="ordered locus">ECDH10B_0028</name>
</gene>
<sequence length="164" mass="18156">MSQSICSTGLRWLWLVVVVLIIDLGSKYLILQNFALGDTVPLFPSLNLHYARNYGAAFSFLADSGGWQRWFFAGIAIGISVILAVMMYRSKATQKLNNIAYALIIGGALGNLFDRLWHGFVVDMIDFYVGDWHFATFNLADTAICVGAALIVLEGFLPSRAKKQ</sequence>
<feature type="chain" id="PRO_1000097253" description="Lipoprotein signal peptidase">
    <location>
        <begin position="1"/>
        <end position="164"/>
    </location>
</feature>
<feature type="transmembrane region" description="Helical" evidence="1">
    <location>
        <begin position="12"/>
        <end position="32"/>
    </location>
</feature>
<feature type="transmembrane region" description="Helical" evidence="1">
    <location>
        <begin position="70"/>
        <end position="90"/>
    </location>
</feature>
<feature type="transmembrane region" description="Helical" evidence="1">
    <location>
        <begin position="102"/>
        <end position="122"/>
    </location>
</feature>
<feature type="transmembrane region" description="Helical" evidence="1">
    <location>
        <begin position="137"/>
        <end position="157"/>
    </location>
</feature>
<feature type="active site" evidence="1">
    <location>
        <position position="123"/>
    </location>
</feature>
<feature type="active site" evidence="1">
    <location>
        <position position="141"/>
    </location>
</feature>
<proteinExistence type="inferred from homology"/>
<organism>
    <name type="scientific">Escherichia coli (strain K12 / DH10B)</name>
    <dbReference type="NCBI Taxonomy" id="316385"/>
    <lineage>
        <taxon>Bacteria</taxon>
        <taxon>Pseudomonadati</taxon>
        <taxon>Pseudomonadota</taxon>
        <taxon>Gammaproteobacteria</taxon>
        <taxon>Enterobacterales</taxon>
        <taxon>Enterobacteriaceae</taxon>
        <taxon>Escherichia</taxon>
    </lineage>
</organism>
<accession>B1XBF2</accession>
<comment type="function">
    <text evidence="1">This protein specifically catalyzes the removal of signal peptides from prolipoproteins.</text>
</comment>
<comment type="catalytic activity">
    <reaction evidence="1">
        <text>Release of signal peptides from bacterial membrane prolipoproteins. Hydrolyzes -Xaa-Yaa-Zaa-|-(S,diacylglyceryl)Cys-, in which Xaa is hydrophobic (preferably Leu), and Yaa (Ala or Ser) and Zaa (Gly or Ala) have small, neutral side chains.</text>
        <dbReference type="EC" id="3.4.23.36"/>
    </reaction>
</comment>
<comment type="pathway">
    <text evidence="1">Protein modification; lipoprotein biosynthesis (signal peptide cleavage).</text>
</comment>
<comment type="subcellular location">
    <subcellularLocation>
        <location evidence="1">Cell inner membrane</location>
        <topology evidence="1">Multi-pass membrane protein</topology>
    </subcellularLocation>
</comment>
<comment type="similarity">
    <text evidence="1">Belongs to the peptidase A8 family.</text>
</comment>
<reference key="1">
    <citation type="journal article" date="2008" name="J. Bacteriol.">
        <title>The complete genome sequence of Escherichia coli DH10B: insights into the biology of a laboratory workhorse.</title>
        <authorList>
            <person name="Durfee T."/>
            <person name="Nelson R."/>
            <person name="Baldwin S."/>
            <person name="Plunkett G. III"/>
            <person name="Burland V."/>
            <person name="Mau B."/>
            <person name="Petrosino J.F."/>
            <person name="Qin X."/>
            <person name="Muzny D.M."/>
            <person name="Ayele M."/>
            <person name="Gibbs R.A."/>
            <person name="Csorgo B."/>
            <person name="Posfai G."/>
            <person name="Weinstock G.M."/>
            <person name="Blattner F.R."/>
        </authorList>
    </citation>
    <scope>NUCLEOTIDE SEQUENCE [LARGE SCALE GENOMIC DNA]</scope>
    <source>
        <strain>K12 / DH10B</strain>
    </source>
</reference>
<evidence type="ECO:0000255" key="1">
    <source>
        <dbReference type="HAMAP-Rule" id="MF_00161"/>
    </source>
</evidence>